<proteinExistence type="inferred from homology"/>
<name>COAE_AGRFC</name>
<evidence type="ECO:0000255" key="1">
    <source>
        <dbReference type="HAMAP-Rule" id="MF_00376"/>
    </source>
</evidence>
<evidence type="ECO:0000305" key="2"/>
<comment type="function">
    <text evidence="1">Catalyzes the phosphorylation of the 3'-hydroxyl group of dephosphocoenzyme A to form coenzyme A.</text>
</comment>
<comment type="catalytic activity">
    <reaction evidence="1">
        <text>3'-dephospho-CoA + ATP = ADP + CoA + H(+)</text>
        <dbReference type="Rhea" id="RHEA:18245"/>
        <dbReference type="ChEBI" id="CHEBI:15378"/>
        <dbReference type="ChEBI" id="CHEBI:30616"/>
        <dbReference type="ChEBI" id="CHEBI:57287"/>
        <dbReference type="ChEBI" id="CHEBI:57328"/>
        <dbReference type="ChEBI" id="CHEBI:456216"/>
        <dbReference type="EC" id="2.7.1.24"/>
    </reaction>
</comment>
<comment type="pathway">
    <text evidence="1">Cofactor biosynthesis; coenzyme A biosynthesis; CoA from (R)-pantothenate: step 5/5.</text>
</comment>
<comment type="subcellular location">
    <subcellularLocation>
        <location evidence="1">Cytoplasm</location>
    </subcellularLocation>
</comment>
<comment type="similarity">
    <text evidence="1">Belongs to the CoaE family.</text>
</comment>
<comment type="sequence caution" evidence="2">
    <conflict type="erroneous initiation">
        <sequence resource="EMBL-CDS" id="AAK85829"/>
    </conflict>
</comment>
<dbReference type="EC" id="2.7.1.24" evidence="1"/>
<dbReference type="EMBL" id="AE007869">
    <property type="protein sequence ID" value="AAK85829.2"/>
    <property type="status" value="ALT_INIT"/>
    <property type="molecule type" value="Genomic_DNA"/>
</dbReference>
<dbReference type="PIR" id="AE2577">
    <property type="entry name" value="AE2577"/>
</dbReference>
<dbReference type="PIR" id="D97359">
    <property type="entry name" value="D97359"/>
</dbReference>
<dbReference type="RefSeq" id="NP_353044.2">
    <property type="nucleotide sequence ID" value="NC_003062.2"/>
</dbReference>
<dbReference type="RefSeq" id="WP_010970593.1">
    <property type="nucleotide sequence ID" value="NC_003062.2"/>
</dbReference>
<dbReference type="SMR" id="Q8UJC4"/>
<dbReference type="STRING" id="176299.Atu0004"/>
<dbReference type="EnsemblBacteria" id="AAK85829">
    <property type="protein sequence ID" value="AAK85829"/>
    <property type="gene ID" value="Atu0004"/>
</dbReference>
<dbReference type="GeneID" id="1132042"/>
<dbReference type="KEGG" id="atu:Atu0004"/>
<dbReference type="PATRIC" id="fig|176299.10.peg.5"/>
<dbReference type="eggNOG" id="COG0237">
    <property type="taxonomic scope" value="Bacteria"/>
</dbReference>
<dbReference type="HOGENOM" id="CLU_057180_3_0_5"/>
<dbReference type="OrthoDB" id="9812943at2"/>
<dbReference type="BioCyc" id="AGRO:ATU0004-MONOMER"/>
<dbReference type="UniPathway" id="UPA00241">
    <property type="reaction ID" value="UER00356"/>
</dbReference>
<dbReference type="Proteomes" id="UP000000813">
    <property type="component" value="Chromosome circular"/>
</dbReference>
<dbReference type="GO" id="GO:0005737">
    <property type="term" value="C:cytoplasm"/>
    <property type="evidence" value="ECO:0007669"/>
    <property type="project" value="UniProtKB-SubCell"/>
</dbReference>
<dbReference type="GO" id="GO:0005524">
    <property type="term" value="F:ATP binding"/>
    <property type="evidence" value="ECO:0007669"/>
    <property type="project" value="UniProtKB-UniRule"/>
</dbReference>
<dbReference type="GO" id="GO:0004140">
    <property type="term" value="F:dephospho-CoA kinase activity"/>
    <property type="evidence" value="ECO:0007669"/>
    <property type="project" value="UniProtKB-UniRule"/>
</dbReference>
<dbReference type="GO" id="GO:0015937">
    <property type="term" value="P:coenzyme A biosynthetic process"/>
    <property type="evidence" value="ECO:0007669"/>
    <property type="project" value="UniProtKB-UniRule"/>
</dbReference>
<dbReference type="CDD" id="cd02022">
    <property type="entry name" value="DPCK"/>
    <property type="match status" value="1"/>
</dbReference>
<dbReference type="Gene3D" id="3.40.50.300">
    <property type="entry name" value="P-loop containing nucleotide triphosphate hydrolases"/>
    <property type="match status" value="1"/>
</dbReference>
<dbReference type="HAMAP" id="MF_00376">
    <property type="entry name" value="Dephospho_CoA_kinase"/>
    <property type="match status" value="1"/>
</dbReference>
<dbReference type="InterPro" id="IPR001977">
    <property type="entry name" value="Depp_CoAkinase"/>
</dbReference>
<dbReference type="InterPro" id="IPR027417">
    <property type="entry name" value="P-loop_NTPase"/>
</dbReference>
<dbReference type="NCBIfam" id="TIGR00152">
    <property type="entry name" value="dephospho-CoA kinase"/>
    <property type="match status" value="1"/>
</dbReference>
<dbReference type="PANTHER" id="PTHR10695:SF46">
    <property type="entry name" value="BIFUNCTIONAL COENZYME A SYNTHASE-RELATED"/>
    <property type="match status" value="1"/>
</dbReference>
<dbReference type="PANTHER" id="PTHR10695">
    <property type="entry name" value="DEPHOSPHO-COA KINASE-RELATED"/>
    <property type="match status" value="1"/>
</dbReference>
<dbReference type="Pfam" id="PF01121">
    <property type="entry name" value="CoaE"/>
    <property type="match status" value="1"/>
</dbReference>
<dbReference type="SUPFAM" id="SSF52540">
    <property type="entry name" value="P-loop containing nucleoside triphosphate hydrolases"/>
    <property type="match status" value="1"/>
</dbReference>
<dbReference type="PROSITE" id="PS51219">
    <property type="entry name" value="DPCK"/>
    <property type="match status" value="1"/>
</dbReference>
<reference key="1">
    <citation type="journal article" date="2001" name="Science">
        <title>The genome of the natural genetic engineer Agrobacterium tumefaciens C58.</title>
        <authorList>
            <person name="Wood D.W."/>
            <person name="Setubal J.C."/>
            <person name="Kaul R."/>
            <person name="Monks D.E."/>
            <person name="Kitajima J.P."/>
            <person name="Okura V.K."/>
            <person name="Zhou Y."/>
            <person name="Chen L."/>
            <person name="Wood G.E."/>
            <person name="Almeida N.F. Jr."/>
            <person name="Woo L."/>
            <person name="Chen Y."/>
            <person name="Paulsen I.T."/>
            <person name="Eisen J.A."/>
            <person name="Karp P.D."/>
            <person name="Bovee D. Sr."/>
            <person name="Chapman P."/>
            <person name="Clendenning J."/>
            <person name="Deatherage G."/>
            <person name="Gillet W."/>
            <person name="Grant C."/>
            <person name="Kutyavin T."/>
            <person name="Levy R."/>
            <person name="Li M.-J."/>
            <person name="McClelland E."/>
            <person name="Palmieri A."/>
            <person name="Raymond C."/>
            <person name="Rouse G."/>
            <person name="Saenphimmachak C."/>
            <person name="Wu Z."/>
            <person name="Romero P."/>
            <person name="Gordon D."/>
            <person name="Zhang S."/>
            <person name="Yoo H."/>
            <person name="Tao Y."/>
            <person name="Biddle P."/>
            <person name="Jung M."/>
            <person name="Krespan W."/>
            <person name="Perry M."/>
            <person name="Gordon-Kamm B."/>
            <person name="Liao L."/>
            <person name="Kim S."/>
            <person name="Hendrick C."/>
            <person name="Zhao Z.-Y."/>
            <person name="Dolan M."/>
            <person name="Chumley F."/>
            <person name="Tingey S.V."/>
            <person name="Tomb J.-F."/>
            <person name="Gordon M.P."/>
            <person name="Olson M.V."/>
            <person name="Nester E.W."/>
        </authorList>
    </citation>
    <scope>NUCLEOTIDE SEQUENCE [LARGE SCALE GENOMIC DNA]</scope>
    <source>
        <strain>C58 / ATCC 33970</strain>
    </source>
</reference>
<reference key="2">
    <citation type="journal article" date="2001" name="Science">
        <title>Genome sequence of the plant pathogen and biotechnology agent Agrobacterium tumefaciens C58.</title>
        <authorList>
            <person name="Goodner B."/>
            <person name="Hinkle G."/>
            <person name="Gattung S."/>
            <person name="Miller N."/>
            <person name="Blanchard M."/>
            <person name="Qurollo B."/>
            <person name="Goldman B.S."/>
            <person name="Cao Y."/>
            <person name="Askenazi M."/>
            <person name="Halling C."/>
            <person name="Mullin L."/>
            <person name="Houmiel K."/>
            <person name="Gordon J."/>
            <person name="Vaudin M."/>
            <person name="Iartchouk O."/>
            <person name="Epp A."/>
            <person name="Liu F."/>
            <person name="Wollam C."/>
            <person name="Allinger M."/>
            <person name="Doughty D."/>
            <person name="Scott C."/>
            <person name="Lappas C."/>
            <person name="Markelz B."/>
            <person name="Flanagan C."/>
            <person name="Crowell C."/>
            <person name="Gurson J."/>
            <person name="Lomo C."/>
            <person name="Sear C."/>
            <person name="Strub G."/>
            <person name="Cielo C."/>
            <person name="Slater S."/>
        </authorList>
    </citation>
    <scope>NUCLEOTIDE SEQUENCE [LARGE SCALE GENOMIC DNA]</scope>
    <source>
        <strain>C58 / ATCC 33970</strain>
    </source>
</reference>
<protein>
    <recommendedName>
        <fullName evidence="1">Dephospho-CoA kinase</fullName>
        <ecNumber evidence="1">2.7.1.24</ecNumber>
    </recommendedName>
    <alternativeName>
        <fullName evidence="1">Dephosphocoenzyme A kinase</fullName>
    </alternativeName>
</protein>
<feature type="chain" id="PRO_0000172898" description="Dephospho-CoA kinase">
    <location>
        <begin position="1"/>
        <end position="194"/>
    </location>
</feature>
<feature type="domain" description="DPCK" evidence="1">
    <location>
        <begin position="4"/>
        <end position="194"/>
    </location>
</feature>
<feature type="binding site" evidence="1">
    <location>
        <begin position="12"/>
        <end position="17"/>
    </location>
    <ligand>
        <name>ATP</name>
        <dbReference type="ChEBI" id="CHEBI:30616"/>
    </ligand>
</feature>
<accession>Q8UJC4</accession>
<keyword id="KW-0067">ATP-binding</keyword>
<keyword id="KW-0173">Coenzyme A biosynthesis</keyword>
<keyword id="KW-0963">Cytoplasm</keyword>
<keyword id="KW-0418">Kinase</keyword>
<keyword id="KW-0547">Nucleotide-binding</keyword>
<keyword id="KW-1185">Reference proteome</keyword>
<keyword id="KW-0808">Transferase</keyword>
<gene>
    <name evidence="1" type="primary">coaE</name>
    <name type="ordered locus">Atu0004</name>
    <name type="ORF">AGR_C_5</name>
</gene>
<sequence>MMIVIGLTGSIGMGKTTTAKLFAEEGVPVLDSDEVVHGLYRAEAVPLIDAAFPGTTISGMVDRQKLGDVLRKNPANFNRLEEIVHPLVRNRQEAFLAKARIDDRAFALLDIPLLFETGAEGRVDKVVVVSCAPEIQRERVLSRPGMTEEKFEMILARQMPDAEKRQRADFVVDSGNGVEAARDQVKEILQKLGA</sequence>
<organism>
    <name type="scientific">Agrobacterium fabrum (strain C58 / ATCC 33970)</name>
    <name type="common">Agrobacterium tumefaciens (strain C58)</name>
    <dbReference type="NCBI Taxonomy" id="176299"/>
    <lineage>
        <taxon>Bacteria</taxon>
        <taxon>Pseudomonadati</taxon>
        <taxon>Pseudomonadota</taxon>
        <taxon>Alphaproteobacteria</taxon>
        <taxon>Hyphomicrobiales</taxon>
        <taxon>Rhizobiaceae</taxon>
        <taxon>Rhizobium/Agrobacterium group</taxon>
        <taxon>Agrobacterium</taxon>
        <taxon>Agrobacterium tumefaciens complex</taxon>
    </lineage>
</organism>